<comment type="subcellular location">
    <subcellularLocation>
        <location evidence="1">Membrane</location>
        <topology evidence="1">Single-pass membrane protein</topology>
    </subcellularLocation>
</comment>
<comment type="induction">
    <text evidence="4">Rapidly induced in local tissues by both compatible and incompatible P.syringae pv. tomato DC3000 strains. Accumulates transiently in systemic tissue after challenge with incompatible P.syringae pv. tomato DC3000(avrRpm1) strain but not with a compatible strains; this systemic induction is abolished by a treatment with the calcium ion channel blocker LaCl(3), thus being dependent of a cytoplasmic calcium burst. Triggered by jasmonic acid (JA) and wounding.</text>
</comment>
<comment type="sequence caution" evidence="6">
    <conflict type="erroneous gene model prediction">
        <sequence resource="EMBL-CDS" id="BAA97028"/>
    </conflict>
</comment>
<gene>
    <name evidence="5" type="primary">A70</name>
    <name evidence="7" type="ordered locus">At5g56980</name>
    <name evidence="8" type="ORF">MHM17.10</name>
</gene>
<name>A70_ARATH</name>
<protein>
    <recommendedName>
        <fullName evidence="5">Pathogen-associated molecular patterns-induced protein A70</fullName>
        <shortName evidence="5">PIG A70</shortName>
    </recommendedName>
</protein>
<reference key="1">
    <citation type="journal article" date="2000" name="DNA Res.">
        <title>Structural analysis of Arabidopsis thaliana chromosome 5. X. Sequence features of the regions of 3,076,755 bp covered by sixty P1 and TAC clones.</title>
        <authorList>
            <person name="Sato S."/>
            <person name="Nakamura Y."/>
            <person name="Kaneko T."/>
            <person name="Katoh T."/>
            <person name="Asamizu E."/>
            <person name="Kotani H."/>
            <person name="Tabata S."/>
        </authorList>
    </citation>
    <scope>NUCLEOTIDE SEQUENCE [LARGE SCALE GENOMIC DNA]</scope>
    <source>
        <strain>cv. Columbia</strain>
    </source>
</reference>
<reference key="2">
    <citation type="journal article" date="2017" name="Plant J.">
        <title>Araport11: a complete reannotation of the Arabidopsis thaliana reference genome.</title>
        <authorList>
            <person name="Cheng C.Y."/>
            <person name="Krishnakumar V."/>
            <person name="Chan A.P."/>
            <person name="Thibaud-Nissen F."/>
            <person name="Schobel S."/>
            <person name="Town C.D."/>
        </authorList>
    </citation>
    <scope>GENOME REANNOTATION</scope>
    <source>
        <strain>cv. Columbia</strain>
    </source>
</reference>
<reference key="3">
    <citation type="journal article" date="2003" name="Science">
        <title>Empirical analysis of transcriptional activity in the Arabidopsis genome.</title>
        <authorList>
            <person name="Yamada K."/>
            <person name="Lim J."/>
            <person name="Dale J.M."/>
            <person name="Chen H."/>
            <person name="Shinn P."/>
            <person name="Palm C.J."/>
            <person name="Southwick A.M."/>
            <person name="Wu H.C."/>
            <person name="Kim C.J."/>
            <person name="Nguyen M."/>
            <person name="Pham P.K."/>
            <person name="Cheuk R.F."/>
            <person name="Karlin-Newmann G."/>
            <person name="Liu S.X."/>
            <person name="Lam B."/>
            <person name="Sakano H."/>
            <person name="Wu T."/>
            <person name="Yu G."/>
            <person name="Miranda M."/>
            <person name="Quach H.L."/>
            <person name="Tripp M."/>
            <person name="Chang C.H."/>
            <person name="Lee J.M."/>
            <person name="Toriumi M.J."/>
            <person name="Chan M.M."/>
            <person name="Tang C.C."/>
            <person name="Onodera C.S."/>
            <person name="Deng J.M."/>
            <person name="Akiyama K."/>
            <person name="Ansari Y."/>
            <person name="Arakawa T."/>
            <person name="Banh J."/>
            <person name="Banno F."/>
            <person name="Bowser L."/>
            <person name="Brooks S.Y."/>
            <person name="Carninci P."/>
            <person name="Chao Q."/>
            <person name="Choy N."/>
            <person name="Enju A."/>
            <person name="Goldsmith A.D."/>
            <person name="Gurjal M."/>
            <person name="Hansen N.F."/>
            <person name="Hayashizaki Y."/>
            <person name="Johnson-Hopson C."/>
            <person name="Hsuan V.W."/>
            <person name="Iida K."/>
            <person name="Karnes M."/>
            <person name="Khan S."/>
            <person name="Koesema E."/>
            <person name="Ishida J."/>
            <person name="Jiang P.X."/>
            <person name="Jones T."/>
            <person name="Kawai J."/>
            <person name="Kamiya A."/>
            <person name="Meyers C."/>
            <person name="Nakajima M."/>
            <person name="Narusaka M."/>
            <person name="Seki M."/>
            <person name="Sakurai T."/>
            <person name="Satou M."/>
            <person name="Tamse R."/>
            <person name="Vaysberg M."/>
            <person name="Wallender E.K."/>
            <person name="Wong C."/>
            <person name="Yamamura Y."/>
            <person name="Yuan S."/>
            <person name="Shinozaki K."/>
            <person name="Davis R.W."/>
            <person name="Theologis A."/>
            <person name="Ecker J.R."/>
        </authorList>
    </citation>
    <scope>NUCLEOTIDE SEQUENCE [LARGE SCALE MRNA]</scope>
    <source>
        <strain>cv. Columbia</strain>
    </source>
</reference>
<reference key="4">
    <citation type="submission" date="2002-03" db="EMBL/GenBank/DDBJ databases">
        <title>Full-length cDNA from Arabidopsis thaliana.</title>
        <authorList>
            <person name="Brover V.V."/>
            <person name="Troukhan M.E."/>
            <person name="Alexandrov N.A."/>
            <person name="Lu Y.-P."/>
            <person name="Flavell R.B."/>
            <person name="Feldmann K.A."/>
        </authorList>
    </citation>
    <scope>NUCLEOTIDE SEQUENCE [LARGE SCALE MRNA]</scope>
</reference>
<reference key="5">
    <citation type="journal article" date="2007" name="Proc. Natl. Acad. Sci. U.S.A.">
        <title>Arabidopsis systemic immunity uses conserved defense signaling pathways and is mediated by jasmonates.</title>
        <authorList>
            <person name="Truman W."/>
            <person name="Bennett M.H."/>
            <person name="Kubigsteltig I."/>
            <person name="Turnbull C."/>
            <person name="Grant M."/>
        </authorList>
    </citation>
    <scope>INDUCTION BY JASMONIC ACID; WOUNDING AND PSEUDOMONAS SYRINGAE</scope>
</reference>
<reference key="6">
    <citation type="journal article" date="2009" name="Plant Physiol.">
        <title>Large-scale Arabidopsis phosphoproteome profiling reveals novel chloroplast kinase substrates and phosphorylation networks.</title>
        <authorList>
            <person name="Reiland S."/>
            <person name="Messerli G."/>
            <person name="Baerenfaller K."/>
            <person name="Gerrits B."/>
            <person name="Endler A."/>
            <person name="Grossmann J."/>
            <person name="Gruissem W."/>
            <person name="Baginsky S."/>
        </authorList>
    </citation>
    <scope>IDENTIFICATION BY MASS SPECTROMETRY [LARGE SCALE ANALYSIS]</scope>
</reference>
<feature type="chain" id="PRO_0000445248" description="Pathogen-associated molecular patterns-induced protein A70">
    <location>
        <begin position="1"/>
        <end position="379"/>
    </location>
</feature>
<feature type="transmembrane region" description="Helical" evidence="1">
    <location>
        <begin position="7"/>
        <end position="29"/>
    </location>
</feature>
<feature type="region of interest" description="Disordered" evidence="3">
    <location>
        <begin position="133"/>
        <end position="154"/>
    </location>
</feature>
<feature type="region of interest" description="Disordered" evidence="3">
    <location>
        <begin position="216"/>
        <end position="238"/>
    </location>
</feature>
<feature type="region of interest" description="Disordered" evidence="3">
    <location>
        <begin position="256"/>
        <end position="347"/>
    </location>
</feature>
<feature type="compositionally biased region" description="Basic and acidic residues" evidence="3">
    <location>
        <begin position="137"/>
        <end position="149"/>
    </location>
</feature>
<feature type="compositionally biased region" description="Polar residues" evidence="3">
    <location>
        <begin position="221"/>
        <end position="231"/>
    </location>
</feature>
<feature type="compositionally biased region" description="Basic and acidic residues" evidence="3">
    <location>
        <begin position="256"/>
        <end position="285"/>
    </location>
</feature>
<feature type="compositionally biased region" description="Basic and acidic residues" evidence="3">
    <location>
        <begin position="322"/>
        <end position="335"/>
    </location>
</feature>
<feature type="glycosylation site" description="N-linked (GlcNAc...) asparagine" evidence="2">
    <location>
        <position position="122"/>
    </location>
</feature>
<feature type="glycosylation site" description="N-linked (GlcNAc...) asparagine" evidence="2">
    <location>
        <position position="170"/>
    </location>
</feature>
<feature type="sequence conflict" description="In Ref. 4; AAM64707." evidence="6" ref="4">
    <original>A</original>
    <variation>G</variation>
    <location>
        <position position="106"/>
    </location>
</feature>
<feature type="sequence conflict" description="In Ref. 4; AAM64707." evidence="6" ref="4">
    <original>P</original>
    <variation>PHS</variation>
    <location>
        <position position="137"/>
    </location>
</feature>
<feature type="sequence conflict" description="In Ref. 3; AAK60285/AAL77711." evidence="6" ref="3">
    <original>K</original>
    <variation>R</variation>
    <location>
        <position position="280"/>
    </location>
</feature>
<feature type="sequence conflict" description="In Ref. 4; AAM64707." evidence="6" ref="4">
    <original>L</original>
    <variation>V</variation>
    <location>
        <position position="323"/>
    </location>
</feature>
<organism>
    <name type="scientific">Arabidopsis thaliana</name>
    <name type="common">Mouse-ear cress</name>
    <dbReference type="NCBI Taxonomy" id="3702"/>
    <lineage>
        <taxon>Eukaryota</taxon>
        <taxon>Viridiplantae</taxon>
        <taxon>Streptophyta</taxon>
        <taxon>Embryophyta</taxon>
        <taxon>Tracheophyta</taxon>
        <taxon>Spermatophyta</taxon>
        <taxon>Magnoliopsida</taxon>
        <taxon>eudicotyledons</taxon>
        <taxon>Gunneridae</taxon>
        <taxon>Pentapetalae</taxon>
        <taxon>rosids</taxon>
        <taxon>malvids</taxon>
        <taxon>Brassicales</taxon>
        <taxon>Brassicaceae</taxon>
        <taxon>Camelineae</taxon>
        <taxon>Arabidopsis</taxon>
    </lineage>
</organism>
<evidence type="ECO:0000255" key="1"/>
<evidence type="ECO:0000255" key="2">
    <source>
        <dbReference type="PROSITE-ProRule" id="PRU00498"/>
    </source>
</evidence>
<evidence type="ECO:0000256" key="3">
    <source>
        <dbReference type="SAM" id="MobiDB-lite"/>
    </source>
</evidence>
<evidence type="ECO:0000269" key="4">
    <source>
    </source>
</evidence>
<evidence type="ECO:0000303" key="5">
    <source>
    </source>
</evidence>
<evidence type="ECO:0000305" key="6"/>
<evidence type="ECO:0000312" key="7">
    <source>
        <dbReference type="Araport" id="AT5G56980"/>
    </source>
</evidence>
<evidence type="ECO:0000312" key="8">
    <source>
        <dbReference type="EMBL" id="BAA97028.2"/>
    </source>
</evidence>
<keyword id="KW-0325">Glycoprotein</keyword>
<keyword id="KW-0472">Membrane</keyword>
<keyword id="KW-1185">Reference proteome</keyword>
<keyword id="KW-0812">Transmembrane</keyword>
<keyword id="KW-1133">Transmembrane helix</keyword>
<accession>F4K956</accession>
<accession>Q8LBK9</accession>
<accession>Q94F56</accession>
<accession>Q9FGR3</accession>
<proteinExistence type="evidence at protein level"/>
<sequence length="379" mass="42728">MELLTTVASFFTPTTLFLLLNLMIGTIVVTSRLGSGSRKHYQHHDGFGSGHAPAPLARAPSIIDRVKSINFHLYKFPHPETELFSMTAHHDIIGSDLHVYPDPNPAPLQRAPSLLDRVKSINMSYFKFPHDVTGSDPHSHSHSHLDLHPDPAPAPLQRAPSLLDRVKSINMSYFKFQQYNPEENDYAHHTEPTRFESIPTRMGRVDPIDISKFRIPEEDQPTGTGVNSQINPPGLTRAPSILERVKSIKLSSFYRSDPDLDQKQNPDPVLHEEHKHVRSKSESKKPVKKKKKALTKMTKSASEKSGFGFAGSHAEAPETVESLERRRPDTTRVERSTSFGDGEDGVDAKASDFINKFKQQLKLQRLDSILRYKEMLKAH</sequence>
<dbReference type="EMBL" id="AB024035">
    <property type="protein sequence ID" value="BAA97028.2"/>
    <property type="status" value="ALT_SEQ"/>
    <property type="molecule type" value="Genomic_DNA"/>
</dbReference>
<dbReference type="EMBL" id="CP002688">
    <property type="protein sequence ID" value="AED96829.1"/>
    <property type="molecule type" value="Genomic_DNA"/>
</dbReference>
<dbReference type="EMBL" id="AF385692">
    <property type="protein sequence ID" value="AAK60285.1"/>
    <property type="molecule type" value="mRNA"/>
</dbReference>
<dbReference type="EMBL" id="AY078010">
    <property type="protein sequence ID" value="AAL77711.1"/>
    <property type="molecule type" value="mRNA"/>
</dbReference>
<dbReference type="EMBL" id="AY087149">
    <property type="protein sequence ID" value="AAM64707.1"/>
    <property type="molecule type" value="mRNA"/>
</dbReference>
<dbReference type="RefSeq" id="NP_568845.1">
    <property type="nucleotide sequence ID" value="NM_125080.2"/>
</dbReference>
<dbReference type="FunCoup" id="F4K956">
    <property type="interactions" value="6"/>
</dbReference>
<dbReference type="IntAct" id="F4K956">
    <property type="interactions" value="1"/>
</dbReference>
<dbReference type="STRING" id="3702.F4K956"/>
<dbReference type="GlyCosmos" id="F4K956">
    <property type="glycosylation" value="2 sites, No reported glycans"/>
</dbReference>
<dbReference type="GlyGen" id="F4K956">
    <property type="glycosylation" value="2 sites"/>
</dbReference>
<dbReference type="iPTMnet" id="F4K956"/>
<dbReference type="PaxDb" id="3702-AT5G56980.1"/>
<dbReference type="ProteomicsDB" id="245109"/>
<dbReference type="EnsemblPlants" id="AT5G56980.1">
    <property type="protein sequence ID" value="AT5G56980.1"/>
    <property type="gene ID" value="AT5G56980"/>
</dbReference>
<dbReference type="GeneID" id="835800"/>
<dbReference type="Gramene" id="AT5G56980.1">
    <property type="protein sequence ID" value="AT5G56980.1"/>
    <property type="gene ID" value="AT5G56980"/>
</dbReference>
<dbReference type="KEGG" id="ath:AT5G56980"/>
<dbReference type="Araport" id="AT5G56980"/>
<dbReference type="TAIR" id="AT5G56980"/>
<dbReference type="eggNOG" id="ENOG502S54W">
    <property type="taxonomic scope" value="Eukaryota"/>
</dbReference>
<dbReference type="HOGENOM" id="CLU_063778_1_0_1"/>
<dbReference type="InParanoid" id="F4K956"/>
<dbReference type="OMA" id="KLQGHYA"/>
<dbReference type="PRO" id="PR:F4K956"/>
<dbReference type="Proteomes" id="UP000006548">
    <property type="component" value="Chromosome 5"/>
</dbReference>
<dbReference type="ExpressionAtlas" id="F4K956">
    <property type="expression patterns" value="baseline and differential"/>
</dbReference>
<dbReference type="GO" id="GO:0016020">
    <property type="term" value="C:membrane"/>
    <property type="evidence" value="ECO:0007669"/>
    <property type="project" value="UniProtKB-SubCell"/>
</dbReference>
<dbReference type="GO" id="GO:0042742">
    <property type="term" value="P:defense response to bacterium"/>
    <property type="evidence" value="ECO:0000270"/>
    <property type="project" value="UniProtKB"/>
</dbReference>
<dbReference type="GO" id="GO:0009617">
    <property type="term" value="P:response to bacterium"/>
    <property type="evidence" value="ECO:0000270"/>
    <property type="project" value="UniProtKB"/>
</dbReference>
<dbReference type="GO" id="GO:0009753">
    <property type="term" value="P:response to jasmonic acid"/>
    <property type="evidence" value="ECO:0000270"/>
    <property type="project" value="UniProtKB"/>
</dbReference>
<dbReference type="GO" id="GO:0009611">
    <property type="term" value="P:response to wounding"/>
    <property type="evidence" value="ECO:0000270"/>
    <property type="project" value="UniProtKB"/>
</dbReference>
<dbReference type="InterPro" id="IPR025520">
    <property type="entry name" value="DUF4408"/>
</dbReference>
<dbReference type="InterPro" id="IPR008480">
    <property type="entry name" value="DUF761_pln"/>
</dbReference>
<dbReference type="PANTHER" id="PTHR33098">
    <property type="entry name" value="COTTON FIBER (DUF761)"/>
    <property type="match status" value="1"/>
</dbReference>
<dbReference type="PANTHER" id="PTHR33098:SF50">
    <property type="entry name" value="PATHOGEN-ASSOCIATED MOLECULAR PATTERNS-INDUCED PROTEIN A70"/>
    <property type="match status" value="1"/>
</dbReference>
<dbReference type="Pfam" id="PF14364">
    <property type="entry name" value="DUF4408"/>
    <property type="match status" value="1"/>
</dbReference>
<dbReference type="Pfam" id="PF05553">
    <property type="entry name" value="DUF761"/>
    <property type="match status" value="1"/>
</dbReference>